<protein>
    <recommendedName>
        <fullName>Homoaconitase, mitochondrial</fullName>
        <ecNumber>4.2.1.36</ecNumber>
    </recommendedName>
    <alternativeName>
        <fullName>Homoaconitate hydratase</fullName>
    </alternativeName>
</protein>
<name>LYS4_ASPFU</name>
<sequence length="777" mass="83716">MFKRTGSLLLRCRASRVPVIGRPLISLSTSSTSLSLSRPRSFATTSLRRYTEASSSTTQTSPSSSSWPAPDAAPRVPQTLTEKIVQAYSLGLAEGQYVKAGDYVMLSPHRCMTHDNSWPTALKFMAIGASKVHNPDQIVMTLDHDVQNKSEKNLKKYESIEKFAKQHGIDFYPAGHGVGHQIMIEEGYAFPGTVTVASDSHSNMYGGVGCLGTPMVRTDAATIWATGRTWWKVPPIAKVQFTGTLPEGVTGKDVIVALSGLFNKDEVLNYAIEFTGSEETMKSLSVDTRLTIANMTTEWGALTGLFPIDSTLEQWLRHKAATASRTETARRFAEERINELFANPTVADRGARYAKYLYLDLSTLSPYVSGPNSVKVATPLDELEKHKLKIDKAYLVSCTNSRASDIAAAAKVFKDAVARTGGPVRVADGVEFYVAAASKAEQKIAEEAGDWQALMDAGAIPLPAGCAVCIGLGAGLLKEGEVGISASNRNFKGRMGSPDAKAYLASPEVVAASALNGVISGPGIYKRPEDWTGVSIGEGEVVESGSRIDTTLEAMEKFIGQLDSMIDSSSKAVMPEESTGSGATEVDIVPGFPEKIEGEILFLDADNISTDGIYPGKYTYQDDVTKDKMAQVCMENYDPAFSGIARAGDIFVSGFNFGCGSSREQAATSILAKQLPLVVAGSIGNTFSRNAVNNALPLLEMPRLIERLREAFGSEKQPTRRTGWTFTWNVRTSQVTVQEGPGGETWSQSVPAFPPNLQDIIAQGGLEKWVKKEISKA</sequence>
<reference key="1">
    <citation type="journal article" date="2004" name="Arch. Microbiol.">
        <title>Deletion of the Aspergillus fumigatus lysine biosynthesis gene lysF encoding homoaconitase leads to attenuated virulence in a low-dose mouse infection model of invasive aspergillosis.</title>
        <authorList>
            <person name="Liebmann B."/>
            <person name="Muehleisen T.W."/>
            <person name="Mueller M."/>
            <person name="Hecht M."/>
            <person name="Weidner G."/>
            <person name="Braun A."/>
            <person name="Brock M."/>
            <person name="Brakhage A.A."/>
        </authorList>
    </citation>
    <scope>NUCLEOTIDE SEQUENCE [GENOMIC DNA]</scope>
    <source>
        <strain>ATCC 46645 / NCPF 2109</strain>
    </source>
</reference>
<reference key="2">
    <citation type="journal article" date="2005" name="Nature">
        <title>Genomic sequence of the pathogenic and allergenic filamentous fungus Aspergillus fumigatus.</title>
        <authorList>
            <person name="Nierman W.C."/>
            <person name="Pain A."/>
            <person name="Anderson M.J."/>
            <person name="Wortman J.R."/>
            <person name="Kim H.S."/>
            <person name="Arroyo J."/>
            <person name="Berriman M."/>
            <person name="Abe K."/>
            <person name="Archer D.B."/>
            <person name="Bermejo C."/>
            <person name="Bennett J.W."/>
            <person name="Bowyer P."/>
            <person name="Chen D."/>
            <person name="Collins M."/>
            <person name="Coulsen R."/>
            <person name="Davies R."/>
            <person name="Dyer P.S."/>
            <person name="Farman M.L."/>
            <person name="Fedorova N."/>
            <person name="Fedorova N.D."/>
            <person name="Feldblyum T.V."/>
            <person name="Fischer R."/>
            <person name="Fosker N."/>
            <person name="Fraser A."/>
            <person name="Garcia J.L."/>
            <person name="Garcia M.J."/>
            <person name="Goble A."/>
            <person name="Goldman G.H."/>
            <person name="Gomi K."/>
            <person name="Griffith-Jones S."/>
            <person name="Gwilliam R."/>
            <person name="Haas B.J."/>
            <person name="Haas H."/>
            <person name="Harris D.E."/>
            <person name="Horiuchi H."/>
            <person name="Huang J."/>
            <person name="Humphray S."/>
            <person name="Jimenez J."/>
            <person name="Keller N."/>
            <person name="Khouri H."/>
            <person name="Kitamoto K."/>
            <person name="Kobayashi T."/>
            <person name="Konzack S."/>
            <person name="Kulkarni R."/>
            <person name="Kumagai T."/>
            <person name="Lafton A."/>
            <person name="Latge J.-P."/>
            <person name="Li W."/>
            <person name="Lord A."/>
            <person name="Lu C."/>
            <person name="Majoros W.H."/>
            <person name="May G.S."/>
            <person name="Miller B.L."/>
            <person name="Mohamoud Y."/>
            <person name="Molina M."/>
            <person name="Monod M."/>
            <person name="Mouyna I."/>
            <person name="Mulligan S."/>
            <person name="Murphy L.D."/>
            <person name="O'Neil S."/>
            <person name="Paulsen I."/>
            <person name="Penalva M.A."/>
            <person name="Pertea M."/>
            <person name="Price C."/>
            <person name="Pritchard B.L."/>
            <person name="Quail M.A."/>
            <person name="Rabbinowitsch E."/>
            <person name="Rawlins N."/>
            <person name="Rajandream M.A."/>
            <person name="Reichard U."/>
            <person name="Renauld H."/>
            <person name="Robson G.D."/>
            <person name="Rodriguez de Cordoba S."/>
            <person name="Rodriguez-Pena J.M."/>
            <person name="Ronning C.M."/>
            <person name="Rutter S."/>
            <person name="Salzberg S.L."/>
            <person name="Sanchez M."/>
            <person name="Sanchez-Ferrero J.C."/>
            <person name="Saunders D."/>
            <person name="Seeger K."/>
            <person name="Squares R."/>
            <person name="Squares S."/>
            <person name="Takeuchi M."/>
            <person name="Tekaia F."/>
            <person name="Turner G."/>
            <person name="Vazquez de Aldana C.R."/>
            <person name="Weidman J."/>
            <person name="White O."/>
            <person name="Woodward J.R."/>
            <person name="Yu J.-H."/>
            <person name="Fraser C.M."/>
            <person name="Galagan J.E."/>
            <person name="Asai K."/>
            <person name="Machida M."/>
            <person name="Hall N."/>
            <person name="Barrell B.G."/>
            <person name="Denning D.W."/>
        </authorList>
    </citation>
    <scope>NUCLEOTIDE SEQUENCE [LARGE SCALE GENOMIC DNA]</scope>
    <source>
        <strain>ATCC MYA-4609 / CBS 101355 / FGSC A1100 / Af293</strain>
    </source>
</reference>
<reference key="3">
    <citation type="journal article" date="2012" name="Mol. Microbiol.">
        <title>The fungal alpha-aminoadipate pathway for lysine biosynthesis requires two enzymes of the aconitase family for the isomerization of homocitrate to homoisocitrate.</title>
        <authorList>
            <person name="Fazius F."/>
            <person name="Shelest E."/>
            <person name="Gebhardt P."/>
            <person name="Brock M."/>
        </authorList>
    </citation>
    <scope>FUNCTION</scope>
    <scope>INDUCTION</scope>
</reference>
<comment type="function">
    <text evidence="4">Catalyzes the reversible hydration of cis-homoaconitate to (2R,3S)-homoisocitrate, a step in the alpha-aminoadipate pathway for lysine biosynthesis.</text>
</comment>
<comment type="catalytic activity">
    <reaction>
        <text>(2R,3S)-homoisocitrate = cis-homoaconitate + H2O</text>
        <dbReference type="Rhea" id="RHEA:15485"/>
        <dbReference type="ChEBI" id="CHEBI:15377"/>
        <dbReference type="ChEBI" id="CHEBI:15404"/>
        <dbReference type="ChEBI" id="CHEBI:58174"/>
        <dbReference type="EC" id="4.2.1.36"/>
    </reaction>
</comment>
<comment type="cofactor">
    <cofactor evidence="1">
        <name>[4Fe-4S] cluster</name>
        <dbReference type="ChEBI" id="CHEBI:49883"/>
    </cofactor>
    <text evidence="1">Binds 1 [4Fe-4S] cluster per subunit.</text>
</comment>
<comment type="pathway">
    <text>Amino-acid biosynthesis; L-lysine biosynthesis via AAA pathway; L-alpha-aminoadipate from 2-oxoglutarate: step 3/5.</text>
</comment>
<comment type="subcellular location">
    <subcellularLocation>
        <location evidence="1">Mitochondrion</location>
    </subcellularLocation>
</comment>
<comment type="induction">
    <text evidence="4">Expression is slightly increased during growth on ethanol.</text>
</comment>
<comment type="similarity">
    <text evidence="5">Belongs to the aconitase/IPM isomerase family.</text>
</comment>
<accession>Q4WUL6</accession>
<accession>Q96VU1</accession>
<gene>
    <name type="primary">lys4</name>
    <name type="synonym">lysF</name>
    <name type="ORF">AFUA_5G08890</name>
</gene>
<keyword id="KW-0028">Amino-acid biosynthesis</keyword>
<keyword id="KW-0408">Iron</keyword>
<keyword id="KW-0411">Iron-sulfur</keyword>
<keyword id="KW-0456">Lyase</keyword>
<keyword id="KW-0457">Lysine biosynthesis</keyword>
<keyword id="KW-0479">Metal-binding</keyword>
<keyword id="KW-0496">Mitochondrion</keyword>
<keyword id="KW-1185">Reference proteome</keyword>
<keyword id="KW-0809">Transit peptide</keyword>
<dbReference type="EC" id="4.2.1.36"/>
<dbReference type="EMBL" id="AJ320167">
    <property type="protein sequence ID" value="CAC48042.1"/>
    <property type="molecule type" value="Genomic_DNA"/>
</dbReference>
<dbReference type="EMBL" id="AAHF01000003">
    <property type="protein sequence ID" value="EAL91710.1"/>
    <property type="molecule type" value="Genomic_DNA"/>
</dbReference>
<dbReference type="RefSeq" id="XP_753748.1">
    <property type="nucleotide sequence ID" value="XM_748655.1"/>
</dbReference>
<dbReference type="SMR" id="Q4WUL6"/>
<dbReference type="FunCoup" id="Q4WUL6">
    <property type="interactions" value="128"/>
</dbReference>
<dbReference type="STRING" id="330879.Q4WUL6"/>
<dbReference type="EnsemblFungi" id="EAL91710">
    <property type="protein sequence ID" value="EAL91710"/>
    <property type="gene ID" value="AFUA_5G08890"/>
</dbReference>
<dbReference type="GeneID" id="3511364"/>
<dbReference type="KEGG" id="afm:AFUA_5G08890"/>
<dbReference type="VEuPathDB" id="FungiDB:Afu5g08890"/>
<dbReference type="eggNOG" id="KOG0453">
    <property type="taxonomic scope" value="Eukaryota"/>
</dbReference>
<dbReference type="HOGENOM" id="CLU_006714_3_1_1"/>
<dbReference type="InParanoid" id="Q4WUL6"/>
<dbReference type="OMA" id="EQMGEYC"/>
<dbReference type="OrthoDB" id="10262323at2759"/>
<dbReference type="UniPathway" id="UPA00033">
    <property type="reaction ID" value="UER01027"/>
</dbReference>
<dbReference type="PHI-base" id="PHI:2520"/>
<dbReference type="PHI-base" id="PHI:362"/>
<dbReference type="Proteomes" id="UP000002530">
    <property type="component" value="Chromosome 5"/>
</dbReference>
<dbReference type="GO" id="GO:0005759">
    <property type="term" value="C:mitochondrial matrix"/>
    <property type="evidence" value="ECO:0007669"/>
    <property type="project" value="EnsemblFungi"/>
</dbReference>
<dbReference type="GO" id="GO:0051539">
    <property type="term" value="F:4 iron, 4 sulfur cluster binding"/>
    <property type="evidence" value="ECO:0007669"/>
    <property type="project" value="InterPro"/>
</dbReference>
<dbReference type="GO" id="GO:0004409">
    <property type="term" value="F:homoaconitate hydratase activity"/>
    <property type="evidence" value="ECO:0007669"/>
    <property type="project" value="UniProtKB-EC"/>
</dbReference>
<dbReference type="GO" id="GO:0046872">
    <property type="term" value="F:metal ion binding"/>
    <property type="evidence" value="ECO:0007669"/>
    <property type="project" value="UniProtKB-KW"/>
</dbReference>
<dbReference type="GO" id="GO:0010106">
    <property type="term" value="P:cellular response to iron ion starvation"/>
    <property type="evidence" value="ECO:0000270"/>
    <property type="project" value="AspGD"/>
</dbReference>
<dbReference type="GO" id="GO:0009085">
    <property type="term" value="P:lysine biosynthetic process"/>
    <property type="evidence" value="ECO:0000315"/>
    <property type="project" value="AspGD"/>
</dbReference>
<dbReference type="GO" id="GO:0019878">
    <property type="term" value="P:lysine biosynthetic process via aminoadipic acid"/>
    <property type="evidence" value="ECO:0007669"/>
    <property type="project" value="UniProtKB-UniPathway"/>
</dbReference>
<dbReference type="CDD" id="cd01674">
    <property type="entry name" value="Homoaconitase_Swivel"/>
    <property type="match status" value="1"/>
</dbReference>
<dbReference type="FunFam" id="3.30.499.10:FF:000013">
    <property type="entry name" value="Homoaconitase, mitochondrial"/>
    <property type="match status" value="1"/>
</dbReference>
<dbReference type="FunFam" id="3.30.499.10:FF:000016">
    <property type="entry name" value="Homoaconitase, mitochondrial"/>
    <property type="match status" value="1"/>
</dbReference>
<dbReference type="Gene3D" id="3.30.499.10">
    <property type="entry name" value="Aconitase, domain 3"/>
    <property type="match status" value="2"/>
</dbReference>
<dbReference type="Gene3D" id="3.20.19.10">
    <property type="entry name" value="Aconitase, domain 4"/>
    <property type="match status" value="1"/>
</dbReference>
<dbReference type="InterPro" id="IPR015931">
    <property type="entry name" value="Acnase/IPM_dHydase_lsu_aba_1/3"/>
</dbReference>
<dbReference type="InterPro" id="IPR001030">
    <property type="entry name" value="Acoase/IPM_deHydtase_lsu_aba"/>
</dbReference>
<dbReference type="InterPro" id="IPR015928">
    <property type="entry name" value="Aconitase/3IPM_dehydase_swvl"/>
</dbReference>
<dbReference type="InterPro" id="IPR018136">
    <property type="entry name" value="Aconitase_4Fe-4S_BS"/>
</dbReference>
<dbReference type="InterPro" id="IPR036008">
    <property type="entry name" value="Aconitase_4Fe-4S_dom"/>
</dbReference>
<dbReference type="InterPro" id="IPR000573">
    <property type="entry name" value="AconitaseA/IPMdHydase_ssu_swvl"/>
</dbReference>
<dbReference type="InterPro" id="IPR004418">
    <property type="entry name" value="Homoaconitase_mito"/>
</dbReference>
<dbReference type="InterPro" id="IPR039386">
    <property type="entry name" value="Homoaconitase_swivel"/>
</dbReference>
<dbReference type="InterPro" id="IPR050067">
    <property type="entry name" value="IPM_dehydratase_rel_enz"/>
</dbReference>
<dbReference type="NCBIfam" id="TIGR00139">
    <property type="entry name" value="h_aconitase"/>
    <property type="match status" value="1"/>
</dbReference>
<dbReference type="PANTHER" id="PTHR43822:SF2">
    <property type="entry name" value="HOMOACONITASE, MITOCHONDRIAL"/>
    <property type="match status" value="1"/>
</dbReference>
<dbReference type="PANTHER" id="PTHR43822">
    <property type="entry name" value="HOMOACONITASE, MITOCHONDRIAL-RELATED"/>
    <property type="match status" value="1"/>
</dbReference>
<dbReference type="Pfam" id="PF00330">
    <property type="entry name" value="Aconitase"/>
    <property type="match status" value="1"/>
</dbReference>
<dbReference type="Pfam" id="PF00694">
    <property type="entry name" value="Aconitase_C"/>
    <property type="match status" value="1"/>
</dbReference>
<dbReference type="PRINTS" id="PR00415">
    <property type="entry name" value="ACONITASE"/>
</dbReference>
<dbReference type="SUPFAM" id="SSF53732">
    <property type="entry name" value="Aconitase iron-sulfur domain"/>
    <property type="match status" value="1"/>
</dbReference>
<dbReference type="SUPFAM" id="SSF52016">
    <property type="entry name" value="LeuD/IlvD-like"/>
    <property type="match status" value="1"/>
</dbReference>
<dbReference type="PROSITE" id="PS00450">
    <property type="entry name" value="ACONITASE_1"/>
    <property type="match status" value="1"/>
</dbReference>
<feature type="transit peptide" description="Mitochondrion" evidence="2">
    <location>
        <begin position="1"/>
        <end position="35"/>
    </location>
</feature>
<feature type="chain" id="PRO_0000247916" description="Homoaconitase, mitochondrial">
    <location>
        <begin position="36"/>
        <end position="777"/>
    </location>
</feature>
<feature type="region of interest" description="Disordered" evidence="3">
    <location>
        <begin position="47"/>
        <end position="74"/>
    </location>
</feature>
<feature type="compositionally biased region" description="Low complexity" evidence="3">
    <location>
        <begin position="52"/>
        <end position="74"/>
    </location>
</feature>
<feature type="binding site" evidence="1">
    <location>
        <position position="398"/>
    </location>
    <ligand>
        <name>[4Fe-4S] cluster</name>
        <dbReference type="ChEBI" id="CHEBI:49883"/>
    </ligand>
</feature>
<feature type="binding site" evidence="1">
    <location>
        <position position="466"/>
    </location>
    <ligand>
        <name>[4Fe-4S] cluster</name>
        <dbReference type="ChEBI" id="CHEBI:49883"/>
    </ligand>
</feature>
<feature type="binding site" evidence="1">
    <location>
        <position position="469"/>
    </location>
    <ligand>
        <name>[4Fe-4S] cluster</name>
        <dbReference type="ChEBI" id="CHEBI:49883"/>
    </ligand>
</feature>
<feature type="sequence conflict" description="In Ref. 1; CAC48042." evidence="5" ref="1">
    <original>T</original>
    <variation>A</variation>
    <location>
        <position position="51"/>
    </location>
</feature>
<feature type="sequence conflict" description="In Ref. 1; CAC48042." evidence="5" ref="1">
    <original>K</original>
    <variation>N</variation>
    <location>
        <position position="165"/>
    </location>
</feature>
<proteinExistence type="evidence at transcript level"/>
<organism>
    <name type="scientific">Aspergillus fumigatus (strain ATCC MYA-4609 / CBS 101355 / FGSC A1100 / Af293)</name>
    <name type="common">Neosartorya fumigata</name>
    <dbReference type="NCBI Taxonomy" id="330879"/>
    <lineage>
        <taxon>Eukaryota</taxon>
        <taxon>Fungi</taxon>
        <taxon>Dikarya</taxon>
        <taxon>Ascomycota</taxon>
        <taxon>Pezizomycotina</taxon>
        <taxon>Eurotiomycetes</taxon>
        <taxon>Eurotiomycetidae</taxon>
        <taxon>Eurotiales</taxon>
        <taxon>Aspergillaceae</taxon>
        <taxon>Aspergillus</taxon>
        <taxon>Aspergillus subgen. Fumigati</taxon>
    </lineage>
</organism>
<evidence type="ECO:0000250" key="1"/>
<evidence type="ECO:0000255" key="2"/>
<evidence type="ECO:0000256" key="3">
    <source>
        <dbReference type="SAM" id="MobiDB-lite"/>
    </source>
</evidence>
<evidence type="ECO:0000269" key="4">
    <source>
    </source>
</evidence>
<evidence type="ECO:0000305" key="5"/>